<evidence type="ECO:0000305" key="1"/>
<evidence type="ECO:0000312" key="2">
    <source>
        <dbReference type="SGD" id="S000004226"/>
    </source>
</evidence>
<protein>
    <recommendedName>
        <fullName evidence="1">Uncharacterized protein YLR236C</fullName>
    </recommendedName>
</protein>
<reference key="1">
    <citation type="journal article" date="1997" name="Nature">
        <title>The nucleotide sequence of Saccharomyces cerevisiae chromosome XII.</title>
        <authorList>
            <person name="Johnston M."/>
            <person name="Hillier L.W."/>
            <person name="Riles L."/>
            <person name="Albermann K."/>
            <person name="Andre B."/>
            <person name="Ansorge W."/>
            <person name="Benes V."/>
            <person name="Brueckner M."/>
            <person name="Delius H."/>
            <person name="Dubois E."/>
            <person name="Duesterhoeft A."/>
            <person name="Entian K.-D."/>
            <person name="Floeth M."/>
            <person name="Goffeau A."/>
            <person name="Hebling U."/>
            <person name="Heumann K."/>
            <person name="Heuss-Neitzel D."/>
            <person name="Hilbert H."/>
            <person name="Hilger F."/>
            <person name="Kleine K."/>
            <person name="Koetter P."/>
            <person name="Louis E.J."/>
            <person name="Messenguy F."/>
            <person name="Mewes H.-W."/>
            <person name="Miosga T."/>
            <person name="Moestl D."/>
            <person name="Mueller-Auer S."/>
            <person name="Nentwich U."/>
            <person name="Obermaier B."/>
            <person name="Piravandi E."/>
            <person name="Pohl T.M."/>
            <person name="Portetelle D."/>
            <person name="Purnelle B."/>
            <person name="Rechmann S."/>
            <person name="Rieger M."/>
            <person name="Rinke M."/>
            <person name="Rose M."/>
            <person name="Scharfe M."/>
            <person name="Scherens B."/>
            <person name="Scholler P."/>
            <person name="Schwager C."/>
            <person name="Schwarz S."/>
            <person name="Underwood A.P."/>
            <person name="Urrestarazu L.A."/>
            <person name="Vandenbol M."/>
            <person name="Verhasselt P."/>
            <person name="Vierendeels F."/>
            <person name="Voet M."/>
            <person name="Volckaert G."/>
            <person name="Voss H."/>
            <person name="Wambutt R."/>
            <person name="Wedler E."/>
            <person name="Wedler H."/>
            <person name="Zimmermann F.K."/>
            <person name="Zollner A."/>
            <person name="Hani J."/>
            <person name="Hoheisel J.D."/>
        </authorList>
    </citation>
    <scope>NUCLEOTIDE SEQUENCE [LARGE SCALE GENOMIC DNA]</scope>
    <source>
        <strain>ATCC 204508 / S288c</strain>
    </source>
</reference>
<reference key="2">
    <citation type="journal article" date="2014" name="G3 (Bethesda)">
        <title>The reference genome sequence of Saccharomyces cerevisiae: Then and now.</title>
        <authorList>
            <person name="Engel S.R."/>
            <person name="Dietrich F.S."/>
            <person name="Fisk D.G."/>
            <person name="Binkley G."/>
            <person name="Balakrishnan R."/>
            <person name="Costanzo M.C."/>
            <person name="Dwight S.S."/>
            <person name="Hitz B.C."/>
            <person name="Karra K."/>
            <person name="Nash R.S."/>
            <person name="Weng S."/>
            <person name="Wong E.D."/>
            <person name="Lloyd P."/>
            <person name="Skrzypek M.S."/>
            <person name="Miyasato S.R."/>
            <person name="Simison M."/>
            <person name="Cherry J.M."/>
        </authorList>
    </citation>
    <scope>GENOME REANNOTATION</scope>
    <source>
        <strain>ATCC 204508 / S288c</strain>
    </source>
</reference>
<accession>A0A023PZG4</accession>
<accession>A0A1S0T0A1</accession>
<organism>
    <name type="scientific">Saccharomyces cerevisiae (strain ATCC 204508 / S288c)</name>
    <name type="common">Baker's yeast</name>
    <dbReference type="NCBI Taxonomy" id="559292"/>
    <lineage>
        <taxon>Eukaryota</taxon>
        <taxon>Fungi</taxon>
        <taxon>Dikarya</taxon>
        <taxon>Ascomycota</taxon>
        <taxon>Saccharomycotina</taxon>
        <taxon>Saccharomycetes</taxon>
        <taxon>Saccharomycetales</taxon>
        <taxon>Saccharomycetaceae</taxon>
        <taxon>Saccharomyces</taxon>
    </lineage>
</organism>
<sequence>MHTICLRSPIDESSPLPYKSIRQPLENAHSCQALCSLMAVLCASAAHRLSETFPMRLVVAREYANWGAFQHAFTRRAGASVAATSAWFDAVAAGTENAHMQSAESCN</sequence>
<proteinExistence type="predicted"/>
<name>YL236_YEAST</name>
<gene>
    <name evidence="2" type="ordered locus">YLR236C</name>
</gene>
<keyword id="KW-1185">Reference proteome</keyword>
<feature type="chain" id="PRO_0000431046" description="Uncharacterized protein YLR236C">
    <location>
        <begin position="1"/>
        <end position="107"/>
    </location>
</feature>
<dbReference type="EMBL" id="KJ412283">
    <property type="protein sequence ID" value="AHX39326.1"/>
    <property type="molecule type" value="Genomic_DNA"/>
</dbReference>
<dbReference type="EMBL" id="BK006945">
    <property type="protein sequence ID" value="DAA80317.1"/>
    <property type="molecule type" value="Genomic_DNA"/>
</dbReference>
<dbReference type="PIR" id="S69299">
    <property type="entry name" value="S69299"/>
</dbReference>
<dbReference type="RefSeq" id="NP_001335797.1">
    <property type="nucleotide sequence ID" value="NM_001348857.1"/>
</dbReference>
<dbReference type="FunCoup" id="A0A023PZG4">
    <property type="interactions" value="15"/>
</dbReference>
<dbReference type="STRING" id="4932.YLR236C"/>
<dbReference type="PaxDb" id="4932-YLR236C"/>
<dbReference type="EnsemblFungi" id="YLR236C_mRNA">
    <property type="protein sequence ID" value="YLR236C"/>
    <property type="gene ID" value="YLR236C"/>
</dbReference>
<dbReference type="GeneID" id="850937"/>
<dbReference type="AGR" id="SGD:S000004226"/>
<dbReference type="SGD" id="S000004226">
    <property type="gene designation" value="YLR236C"/>
</dbReference>
<dbReference type="HOGENOM" id="CLU_2212034_0_0_1"/>
<dbReference type="InParanoid" id="A0A023PZG4"/>
<dbReference type="OrthoDB" id="10279328at2759"/>
<dbReference type="PRO" id="PR:A0A023PZG4"/>
<dbReference type="Proteomes" id="UP000002311">
    <property type="component" value="Chromosome XII"/>
</dbReference>
<dbReference type="RNAct" id="A0A023PZG4">
    <property type="molecule type" value="protein"/>
</dbReference>